<reference key="1">
    <citation type="journal article" date="2002" name="Proc. Natl. Acad. Sci. U.S.A.">
        <title>The Brucella suis genome reveals fundamental similarities between animal and plant pathogens and symbionts.</title>
        <authorList>
            <person name="Paulsen I.T."/>
            <person name="Seshadri R."/>
            <person name="Nelson K.E."/>
            <person name="Eisen J.A."/>
            <person name="Heidelberg J.F."/>
            <person name="Read T.D."/>
            <person name="Dodson R.J."/>
            <person name="Umayam L.A."/>
            <person name="Brinkac L.M."/>
            <person name="Beanan M.J."/>
            <person name="Daugherty S.C."/>
            <person name="DeBoy R.T."/>
            <person name="Durkin A.S."/>
            <person name="Kolonay J.F."/>
            <person name="Madupu R."/>
            <person name="Nelson W.C."/>
            <person name="Ayodeji B."/>
            <person name="Kraul M."/>
            <person name="Shetty J."/>
            <person name="Malek J.A."/>
            <person name="Van Aken S.E."/>
            <person name="Riedmuller S."/>
            <person name="Tettelin H."/>
            <person name="Gill S.R."/>
            <person name="White O."/>
            <person name="Salzberg S.L."/>
            <person name="Hoover D.L."/>
            <person name="Lindler L.E."/>
            <person name="Halling S.M."/>
            <person name="Boyle S.M."/>
            <person name="Fraser C.M."/>
        </authorList>
    </citation>
    <scope>NUCLEOTIDE SEQUENCE [LARGE SCALE GENOMIC DNA]</scope>
    <source>
        <strain>1330</strain>
    </source>
</reference>
<reference key="2">
    <citation type="journal article" date="2011" name="J. Bacteriol.">
        <title>Revised genome sequence of Brucella suis 1330.</title>
        <authorList>
            <person name="Tae H."/>
            <person name="Shallom S."/>
            <person name="Settlage R."/>
            <person name="Preston D."/>
            <person name="Adams L.G."/>
            <person name="Garner H.R."/>
        </authorList>
    </citation>
    <scope>NUCLEOTIDE SEQUENCE [LARGE SCALE GENOMIC DNA]</scope>
    <source>
        <strain>1330</strain>
    </source>
</reference>
<evidence type="ECO:0000255" key="1">
    <source>
        <dbReference type="HAMAP-Rule" id="MF_01270"/>
    </source>
</evidence>
<keyword id="KW-0067">ATP-binding</keyword>
<keyword id="KW-0119">Carbohydrate metabolism</keyword>
<keyword id="KW-0418">Kinase</keyword>
<keyword id="KW-0547">Nucleotide-binding</keyword>
<keyword id="KW-0808">Transferase</keyword>
<protein>
    <recommendedName>
        <fullName evidence="1">Anhydro-N-acetylmuramic acid kinase</fullName>
        <ecNumber evidence="1">2.7.1.170</ecNumber>
    </recommendedName>
    <alternativeName>
        <fullName evidence="1">AnhMurNAc kinase</fullName>
    </alternativeName>
</protein>
<name>ANMK_BRUSU</name>
<organism>
    <name type="scientific">Brucella suis biovar 1 (strain 1330)</name>
    <dbReference type="NCBI Taxonomy" id="204722"/>
    <lineage>
        <taxon>Bacteria</taxon>
        <taxon>Pseudomonadati</taxon>
        <taxon>Pseudomonadota</taxon>
        <taxon>Alphaproteobacteria</taxon>
        <taxon>Hyphomicrobiales</taxon>
        <taxon>Brucellaceae</taxon>
        <taxon>Brucella/Ochrobactrum group</taxon>
        <taxon>Brucella</taxon>
    </lineage>
</organism>
<gene>
    <name evidence="1" type="primary">anmK</name>
    <name type="ordered locus">BR0927</name>
    <name type="ordered locus">BS1330_I0923</name>
</gene>
<accession>Q8G104</accession>
<accession>G0K9F3</accession>
<proteinExistence type="inferred from homology"/>
<comment type="function">
    <text evidence="1">Catalyzes the specific phosphorylation of 1,6-anhydro-N-acetylmuramic acid (anhMurNAc) with the simultaneous cleavage of the 1,6-anhydro ring, generating MurNAc-6-P. Is required for the utilization of anhMurNAc either imported from the medium or derived from its own cell wall murein, and thus plays a role in cell wall recycling.</text>
</comment>
<comment type="catalytic activity">
    <reaction evidence="1">
        <text>1,6-anhydro-N-acetyl-beta-muramate + ATP + H2O = N-acetyl-D-muramate 6-phosphate + ADP + H(+)</text>
        <dbReference type="Rhea" id="RHEA:24952"/>
        <dbReference type="ChEBI" id="CHEBI:15377"/>
        <dbReference type="ChEBI" id="CHEBI:15378"/>
        <dbReference type="ChEBI" id="CHEBI:30616"/>
        <dbReference type="ChEBI" id="CHEBI:58690"/>
        <dbReference type="ChEBI" id="CHEBI:58722"/>
        <dbReference type="ChEBI" id="CHEBI:456216"/>
        <dbReference type="EC" id="2.7.1.170"/>
    </reaction>
</comment>
<comment type="pathway">
    <text evidence="1">Amino-sugar metabolism; 1,6-anhydro-N-acetylmuramate degradation.</text>
</comment>
<comment type="pathway">
    <text evidence="1">Cell wall biogenesis; peptidoglycan recycling.</text>
</comment>
<comment type="similarity">
    <text evidence="1">Belongs to the anhydro-N-acetylmuramic acid kinase family.</text>
</comment>
<sequence>MPDLKRAIGLMSGTSMDGIDIALLATDGENWIERRASASMDYSDGFRARLKAGLVDARAIKDRAERPGLLRQLEHDLTLLHAVAVHDFLHEQGLQPHEIDVIGFHGQTVLHRPNESLTVQIGDGALLARETGIPVVYDMRAEDMRHGGQGAPLIPAYHAALAANLPLGLKGPVVFVNIGGISNLTYVGEDGALIAYDSGPGNMLIDQWMELHGHGRFDPGGATAMSGSVDRNTAHRYLEHEFFKGNHRRSLDRGDFAIPAKGELNLADGARTLAFVSAAAILKSASHLPARPRTYVVSGGGRKNGALMDELTALAEREGAHVIDADNAGFDGDAMEAEAWAYLAVRSLCGLPLTYPSTTGCDKPVSGGVPVRP</sequence>
<dbReference type="EC" id="2.7.1.170" evidence="1"/>
<dbReference type="EMBL" id="AE014291">
    <property type="protein sequence ID" value="AAN29853.1"/>
    <property type="molecule type" value="Genomic_DNA"/>
</dbReference>
<dbReference type="EMBL" id="CP002997">
    <property type="protein sequence ID" value="AEM18270.1"/>
    <property type="molecule type" value="Genomic_DNA"/>
</dbReference>
<dbReference type="RefSeq" id="WP_002964051.1">
    <property type="nucleotide sequence ID" value="NZ_KN046804.1"/>
</dbReference>
<dbReference type="SMR" id="Q8G104"/>
<dbReference type="KEGG" id="bms:BR0927"/>
<dbReference type="KEGG" id="bsi:BS1330_I0923"/>
<dbReference type="PATRIC" id="fig|204722.21.peg.3290"/>
<dbReference type="HOGENOM" id="CLU_038782_3_0_5"/>
<dbReference type="PhylomeDB" id="Q8G104"/>
<dbReference type="UniPathway" id="UPA00343"/>
<dbReference type="UniPathway" id="UPA00544"/>
<dbReference type="Proteomes" id="UP000007104">
    <property type="component" value="Chromosome I"/>
</dbReference>
<dbReference type="GO" id="GO:0005524">
    <property type="term" value="F:ATP binding"/>
    <property type="evidence" value="ECO:0007669"/>
    <property type="project" value="UniProtKB-UniRule"/>
</dbReference>
<dbReference type="GO" id="GO:0016301">
    <property type="term" value="F:kinase activity"/>
    <property type="evidence" value="ECO:0007669"/>
    <property type="project" value="UniProtKB-KW"/>
</dbReference>
<dbReference type="GO" id="GO:0016773">
    <property type="term" value="F:phosphotransferase activity, alcohol group as acceptor"/>
    <property type="evidence" value="ECO:0007669"/>
    <property type="project" value="UniProtKB-UniRule"/>
</dbReference>
<dbReference type="GO" id="GO:0097175">
    <property type="term" value="P:1,6-anhydro-N-acetyl-beta-muramic acid catabolic process"/>
    <property type="evidence" value="ECO:0007669"/>
    <property type="project" value="UniProtKB-UniRule"/>
</dbReference>
<dbReference type="GO" id="GO:0006040">
    <property type="term" value="P:amino sugar metabolic process"/>
    <property type="evidence" value="ECO:0007669"/>
    <property type="project" value="InterPro"/>
</dbReference>
<dbReference type="GO" id="GO:0009254">
    <property type="term" value="P:peptidoglycan turnover"/>
    <property type="evidence" value="ECO:0007669"/>
    <property type="project" value="UniProtKB-UniRule"/>
</dbReference>
<dbReference type="Gene3D" id="3.30.420.40">
    <property type="match status" value="2"/>
</dbReference>
<dbReference type="HAMAP" id="MF_01270">
    <property type="entry name" value="AnhMurNAc_kinase"/>
    <property type="match status" value="1"/>
</dbReference>
<dbReference type="InterPro" id="IPR005338">
    <property type="entry name" value="Anhydro_N_Ac-Mur_kinase"/>
</dbReference>
<dbReference type="InterPro" id="IPR043129">
    <property type="entry name" value="ATPase_NBD"/>
</dbReference>
<dbReference type="NCBIfam" id="NF007141">
    <property type="entry name" value="PRK09585.1-5"/>
    <property type="match status" value="1"/>
</dbReference>
<dbReference type="PANTHER" id="PTHR30605">
    <property type="entry name" value="ANHYDRO-N-ACETYLMURAMIC ACID KINASE"/>
    <property type="match status" value="1"/>
</dbReference>
<dbReference type="PANTHER" id="PTHR30605:SF0">
    <property type="entry name" value="ANHYDRO-N-ACETYLMURAMIC ACID KINASE"/>
    <property type="match status" value="1"/>
</dbReference>
<dbReference type="Pfam" id="PF03702">
    <property type="entry name" value="AnmK"/>
    <property type="match status" value="1"/>
</dbReference>
<dbReference type="SUPFAM" id="SSF53067">
    <property type="entry name" value="Actin-like ATPase domain"/>
    <property type="match status" value="1"/>
</dbReference>
<feature type="chain" id="PRO_0000249983" description="Anhydro-N-acetylmuramic acid kinase">
    <location>
        <begin position="1"/>
        <end position="373"/>
    </location>
</feature>
<feature type="binding site" evidence="1">
    <location>
        <begin position="13"/>
        <end position="20"/>
    </location>
    <ligand>
        <name>ATP</name>
        <dbReference type="ChEBI" id="CHEBI:30616"/>
    </ligand>
</feature>